<proteinExistence type="inferred from homology"/>
<feature type="chain" id="PRO_1000213187" description="Transcriptional regulator MraZ">
    <location>
        <begin position="1"/>
        <end position="142"/>
    </location>
</feature>
<feature type="domain" description="SpoVT-AbrB 1" evidence="2">
    <location>
        <begin position="5"/>
        <end position="51"/>
    </location>
</feature>
<feature type="domain" description="SpoVT-AbrB 2" evidence="2">
    <location>
        <begin position="77"/>
        <end position="120"/>
    </location>
</feature>
<keyword id="KW-0963">Cytoplasm</keyword>
<keyword id="KW-0238">DNA-binding</keyword>
<keyword id="KW-0677">Repeat</keyword>
<keyword id="KW-0804">Transcription</keyword>
<keyword id="KW-0805">Transcription regulation</keyword>
<reference key="1">
    <citation type="journal article" date="2011" name="J. Bacteriol.">
        <title>Complete genome sequence of the metabolically versatile plant growth-promoting endophyte, Variovorax paradoxus S110.</title>
        <authorList>
            <person name="Han J.I."/>
            <person name="Choi H.K."/>
            <person name="Lee S.W."/>
            <person name="Orwin P.M."/>
            <person name="Kim J."/>
            <person name="Laroe S.L."/>
            <person name="Kim T.G."/>
            <person name="O'Neil J."/>
            <person name="Leadbetter J.R."/>
            <person name="Lee S.Y."/>
            <person name="Hur C.G."/>
            <person name="Spain J.C."/>
            <person name="Ovchinnikova G."/>
            <person name="Goodwin L."/>
            <person name="Han C."/>
        </authorList>
    </citation>
    <scope>NUCLEOTIDE SEQUENCE [LARGE SCALE GENOMIC DNA]</scope>
    <source>
        <strain>S110</strain>
    </source>
</reference>
<gene>
    <name evidence="1" type="primary">mraZ</name>
    <name type="ordered locus">Vapar_0910</name>
</gene>
<organism>
    <name type="scientific">Variovorax paradoxus (strain S110)</name>
    <dbReference type="NCBI Taxonomy" id="543728"/>
    <lineage>
        <taxon>Bacteria</taxon>
        <taxon>Pseudomonadati</taxon>
        <taxon>Pseudomonadota</taxon>
        <taxon>Betaproteobacteria</taxon>
        <taxon>Burkholderiales</taxon>
        <taxon>Comamonadaceae</taxon>
        <taxon>Variovorax</taxon>
    </lineage>
</organism>
<accession>C5CNE5</accession>
<sequence length="142" mass="15865">MFQGASSLSLDAKGRLSVPTRHRDVLSATAGGQLTITKHPHGCLMVFPRPEWEKFRERIAALPMSAQWWKRVFLGNAMDVEMDGTGRILVSPELRAATGIVRDTLLLGMGNHFELWDKATYEAKEAEATQGEMPDVFQDFAF</sequence>
<name>MRAZ_VARPS</name>
<dbReference type="EMBL" id="CP001635">
    <property type="protein sequence ID" value="ACS17561.1"/>
    <property type="molecule type" value="Genomic_DNA"/>
</dbReference>
<dbReference type="SMR" id="C5CNE5"/>
<dbReference type="STRING" id="543728.Vapar_0910"/>
<dbReference type="KEGG" id="vap:Vapar_0910"/>
<dbReference type="eggNOG" id="COG2001">
    <property type="taxonomic scope" value="Bacteria"/>
</dbReference>
<dbReference type="HOGENOM" id="CLU_107907_2_1_4"/>
<dbReference type="OrthoDB" id="9807753at2"/>
<dbReference type="GO" id="GO:0005737">
    <property type="term" value="C:cytoplasm"/>
    <property type="evidence" value="ECO:0007669"/>
    <property type="project" value="UniProtKB-UniRule"/>
</dbReference>
<dbReference type="GO" id="GO:0009295">
    <property type="term" value="C:nucleoid"/>
    <property type="evidence" value="ECO:0007669"/>
    <property type="project" value="UniProtKB-SubCell"/>
</dbReference>
<dbReference type="GO" id="GO:0003700">
    <property type="term" value="F:DNA-binding transcription factor activity"/>
    <property type="evidence" value="ECO:0007669"/>
    <property type="project" value="UniProtKB-UniRule"/>
</dbReference>
<dbReference type="GO" id="GO:0000976">
    <property type="term" value="F:transcription cis-regulatory region binding"/>
    <property type="evidence" value="ECO:0007669"/>
    <property type="project" value="TreeGrafter"/>
</dbReference>
<dbReference type="GO" id="GO:2000143">
    <property type="term" value="P:negative regulation of DNA-templated transcription initiation"/>
    <property type="evidence" value="ECO:0007669"/>
    <property type="project" value="TreeGrafter"/>
</dbReference>
<dbReference type="CDD" id="cd16321">
    <property type="entry name" value="MraZ_C"/>
    <property type="match status" value="1"/>
</dbReference>
<dbReference type="CDD" id="cd16320">
    <property type="entry name" value="MraZ_N"/>
    <property type="match status" value="1"/>
</dbReference>
<dbReference type="Gene3D" id="3.40.1550.20">
    <property type="entry name" value="Transcriptional regulator MraZ domain"/>
    <property type="match status" value="1"/>
</dbReference>
<dbReference type="HAMAP" id="MF_01008">
    <property type="entry name" value="MraZ"/>
    <property type="match status" value="1"/>
</dbReference>
<dbReference type="InterPro" id="IPR003444">
    <property type="entry name" value="MraZ"/>
</dbReference>
<dbReference type="InterPro" id="IPR035644">
    <property type="entry name" value="MraZ_C"/>
</dbReference>
<dbReference type="InterPro" id="IPR020603">
    <property type="entry name" value="MraZ_dom"/>
</dbReference>
<dbReference type="InterPro" id="IPR035642">
    <property type="entry name" value="MraZ_N"/>
</dbReference>
<dbReference type="InterPro" id="IPR038619">
    <property type="entry name" value="MraZ_sf"/>
</dbReference>
<dbReference type="InterPro" id="IPR007159">
    <property type="entry name" value="SpoVT-AbrB_dom"/>
</dbReference>
<dbReference type="InterPro" id="IPR037914">
    <property type="entry name" value="SpoVT-AbrB_sf"/>
</dbReference>
<dbReference type="NCBIfam" id="TIGR00242">
    <property type="entry name" value="division/cell wall cluster transcriptional repressor MraZ"/>
    <property type="match status" value="1"/>
</dbReference>
<dbReference type="PANTHER" id="PTHR34701">
    <property type="entry name" value="TRANSCRIPTIONAL REGULATOR MRAZ"/>
    <property type="match status" value="1"/>
</dbReference>
<dbReference type="PANTHER" id="PTHR34701:SF1">
    <property type="entry name" value="TRANSCRIPTIONAL REGULATOR MRAZ"/>
    <property type="match status" value="1"/>
</dbReference>
<dbReference type="Pfam" id="PF02381">
    <property type="entry name" value="MraZ"/>
    <property type="match status" value="2"/>
</dbReference>
<dbReference type="SUPFAM" id="SSF89447">
    <property type="entry name" value="AbrB/MazE/MraZ-like"/>
    <property type="match status" value="1"/>
</dbReference>
<dbReference type="PROSITE" id="PS51740">
    <property type="entry name" value="SPOVT_ABRB"/>
    <property type="match status" value="2"/>
</dbReference>
<protein>
    <recommendedName>
        <fullName>Transcriptional regulator MraZ</fullName>
    </recommendedName>
</protein>
<comment type="subunit">
    <text evidence="1">Forms oligomers.</text>
</comment>
<comment type="subcellular location">
    <subcellularLocation>
        <location evidence="1">Cytoplasm</location>
        <location evidence="1">Nucleoid</location>
    </subcellularLocation>
</comment>
<comment type="similarity">
    <text evidence="1">Belongs to the MraZ family.</text>
</comment>
<evidence type="ECO:0000255" key="1">
    <source>
        <dbReference type="HAMAP-Rule" id="MF_01008"/>
    </source>
</evidence>
<evidence type="ECO:0000255" key="2">
    <source>
        <dbReference type="PROSITE-ProRule" id="PRU01076"/>
    </source>
</evidence>